<sequence>MAVSLLLRGGRIRALKAVLLEARVFPGELVSVVRLSTESEKSAKEKELHPKTQSVLKEPEPTDTTTYKNLQHHDYNTYTFLDLNLDLSKFRLPQPSSGRESPRH</sequence>
<accession>Q8BK30</accession>
<name>NDUV3_MOUSE</name>
<keyword id="KW-0002">3D-structure</keyword>
<keyword id="KW-0249">Electron transport</keyword>
<keyword id="KW-0472">Membrane</keyword>
<keyword id="KW-0496">Mitochondrion</keyword>
<keyword id="KW-0999">Mitochondrion inner membrane</keyword>
<keyword id="KW-0597">Phosphoprotein</keyword>
<keyword id="KW-1185">Reference proteome</keyword>
<keyword id="KW-0679">Respiratory chain</keyword>
<keyword id="KW-0809">Transit peptide</keyword>
<keyword id="KW-0813">Transport</keyword>
<dbReference type="EMBL" id="AK077433">
    <property type="protein sequence ID" value="BAC36798.1"/>
    <property type="molecule type" value="mRNA"/>
</dbReference>
<dbReference type="CCDS" id="CCDS37550.1"/>
<dbReference type="RefSeq" id="NP_001077360.1">
    <property type="nucleotide sequence ID" value="NM_001083891.1"/>
</dbReference>
<dbReference type="PDB" id="6G2J">
    <property type="method" value="EM"/>
    <property type="resolution" value="3.30 A"/>
    <property type="chains" value="s=1-104"/>
</dbReference>
<dbReference type="PDB" id="6G72">
    <property type="method" value="EM"/>
    <property type="resolution" value="3.90 A"/>
    <property type="chains" value="s=1-104"/>
</dbReference>
<dbReference type="PDB" id="6ZR2">
    <property type="method" value="EM"/>
    <property type="resolution" value="3.10 A"/>
    <property type="chains" value="s=1-104"/>
</dbReference>
<dbReference type="PDB" id="6ZTQ">
    <property type="method" value="EM"/>
    <property type="resolution" value="3.00 A"/>
    <property type="chains" value="s=1-104"/>
</dbReference>
<dbReference type="PDB" id="7AK5">
    <property type="method" value="EM"/>
    <property type="resolution" value="3.17 A"/>
    <property type="chains" value="s=1-104"/>
</dbReference>
<dbReference type="PDB" id="7AK6">
    <property type="method" value="EM"/>
    <property type="resolution" value="3.82 A"/>
    <property type="chains" value="s=1-104"/>
</dbReference>
<dbReference type="PDB" id="7B93">
    <property type="method" value="EM"/>
    <property type="resolution" value="3.04 A"/>
    <property type="chains" value="s=1-104"/>
</dbReference>
<dbReference type="PDB" id="7PSA">
    <property type="method" value="EM"/>
    <property type="resolution" value="3.40 A"/>
    <property type="chains" value="s=1-104"/>
</dbReference>
<dbReference type="PDB" id="8C2S">
    <property type="method" value="EM"/>
    <property type="resolution" value="3.90 A"/>
    <property type="chains" value="s=1-104"/>
</dbReference>
<dbReference type="PDB" id="8CA3">
    <property type="method" value="EM"/>
    <property type="resolution" value="3.20 A"/>
    <property type="chains" value="s=1-104"/>
</dbReference>
<dbReference type="PDB" id="8CA4">
    <property type="method" value="EM"/>
    <property type="resolution" value="3.25 A"/>
    <property type="chains" value="s=1-104"/>
</dbReference>
<dbReference type="PDB" id="8CA5">
    <property type="method" value="EM"/>
    <property type="resolution" value="3.90 A"/>
    <property type="chains" value="s=1-104"/>
</dbReference>
<dbReference type="PDB" id="8IAO">
    <property type="method" value="EM"/>
    <property type="resolution" value="4.20 A"/>
    <property type="chains" value="s=1-104"/>
</dbReference>
<dbReference type="PDB" id="8IAP">
    <property type="method" value="EM"/>
    <property type="resolution" value="3.20 A"/>
    <property type="chains" value="s=1-104"/>
</dbReference>
<dbReference type="PDB" id="8IB4">
    <property type="method" value="EM"/>
    <property type="resolution" value="4.30 A"/>
    <property type="chains" value="s=1-104"/>
</dbReference>
<dbReference type="PDB" id="8IB5">
    <property type="method" value="EM"/>
    <property type="resolution" value="3.30 A"/>
    <property type="chains" value="s=1-104"/>
</dbReference>
<dbReference type="PDB" id="8IB9">
    <property type="method" value="EM"/>
    <property type="resolution" value="4.30 A"/>
    <property type="chains" value="s=1-104"/>
</dbReference>
<dbReference type="PDB" id="8IBA">
    <property type="method" value="EM"/>
    <property type="resolution" value="3.20 A"/>
    <property type="chains" value="s=1-104"/>
</dbReference>
<dbReference type="PDB" id="8IBD">
    <property type="method" value="EM"/>
    <property type="resolution" value="4.20 A"/>
    <property type="chains" value="s=1-104"/>
</dbReference>
<dbReference type="PDB" id="8IBE">
    <property type="method" value="EM"/>
    <property type="resolution" value="3.30 A"/>
    <property type="chains" value="s=1-104"/>
</dbReference>
<dbReference type="PDB" id="8IC2">
    <property type="method" value="EM"/>
    <property type="resolution" value="6.30 A"/>
    <property type="chains" value="s=1-104"/>
</dbReference>
<dbReference type="PDB" id="8IC3">
    <property type="method" value="EM"/>
    <property type="resolution" value="3.20 A"/>
    <property type="chains" value="s=1-104"/>
</dbReference>
<dbReference type="PDB" id="8OLT">
    <property type="method" value="EM"/>
    <property type="resolution" value="2.84 A"/>
    <property type="chains" value="s=1-104"/>
</dbReference>
<dbReference type="PDB" id="8OM1">
    <property type="method" value="EM"/>
    <property type="resolution" value="2.39 A"/>
    <property type="chains" value="s=1-104"/>
</dbReference>
<dbReference type="PDB" id="8PW5">
    <property type="method" value="EM"/>
    <property type="resolution" value="3.60 A"/>
    <property type="chains" value="s1=1-104"/>
</dbReference>
<dbReference type="PDB" id="8PW6">
    <property type="method" value="EM"/>
    <property type="resolution" value="3.30 A"/>
    <property type="chains" value="s1=1-104"/>
</dbReference>
<dbReference type="PDB" id="8PW7">
    <property type="method" value="EM"/>
    <property type="resolution" value="3.50 A"/>
    <property type="chains" value="s1=1-104"/>
</dbReference>
<dbReference type="PDB" id="8RGP">
    <property type="method" value="EM"/>
    <property type="resolution" value="3.00 A"/>
    <property type="chains" value="s=1-104"/>
</dbReference>
<dbReference type="PDB" id="8RGQ">
    <property type="method" value="EM"/>
    <property type="resolution" value="3.00 A"/>
    <property type="chains" value="s=1-104"/>
</dbReference>
<dbReference type="PDB" id="8RGR">
    <property type="method" value="EM"/>
    <property type="resolution" value="2.90 A"/>
    <property type="chains" value="s=1-104"/>
</dbReference>
<dbReference type="PDB" id="8RGT">
    <property type="method" value="EM"/>
    <property type="resolution" value="3.10 A"/>
    <property type="chains" value="s=1-104"/>
</dbReference>
<dbReference type="PDB" id="8UCA">
    <property type="method" value="EM"/>
    <property type="resolution" value="3.70 A"/>
    <property type="chains" value="V3/v3=1-104"/>
</dbReference>
<dbReference type="PDB" id="8XNL">
    <property type="method" value="EM"/>
    <property type="resolution" value="3.10 A"/>
    <property type="chains" value="s=1-104"/>
</dbReference>
<dbReference type="PDB" id="8XNM">
    <property type="method" value="EM"/>
    <property type="resolution" value="3.50 A"/>
    <property type="chains" value="s=1-104"/>
</dbReference>
<dbReference type="PDB" id="8XNN">
    <property type="method" value="EM"/>
    <property type="resolution" value="3.60 A"/>
    <property type="chains" value="s=1-104"/>
</dbReference>
<dbReference type="PDB" id="8XNO">
    <property type="method" value="EM"/>
    <property type="resolution" value="3.40 A"/>
    <property type="chains" value="s=1-104"/>
</dbReference>
<dbReference type="PDB" id="8XNP">
    <property type="method" value="EM"/>
    <property type="resolution" value="3.50 A"/>
    <property type="chains" value="s=1-104"/>
</dbReference>
<dbReference type="PDB" id="8XNQ">
    <property type="method" value="EM"/>
    <property type="resolution" value="3.70 A"/>
    <property type="chains" value="s=1-104"/>
</dbReference>
<dbReference type="PDB" id="8XNR">
    <property type="method" value="EM"/>
    <property type="resolution" value="3.30 A"/>
    <property type="chains" value="s=1-104"/>
</dbReference>
<dbReference type="PDB" id="8XNS">
    <property type="method" value="EM"/>
    <property type="resolution" value="3.50 A"/>
    <property type="chains" value="s=1-104"/>
</dbReference>
<dbReference type="PDB" id="8XNT">
    <property type="method" value="EM"/>
    <property type="resolution" value="4.10 A"/>
    <property type="chains" value="s=1-104"/>
</dbReference>
<dbReference type="PDB" id="8XNU">
    <property type="method" value="EM"/>
    <property type="resolution" value="3.60 A"/>
    <property type="chains" value="s=1-104"/>
</dbReference>
<dbReference type="PDB" id="8XNV">
    <property type="method" value="EM"/>
    <property type="resolution" value="3.30 A"/>
    <property type="chains" value="s=1-104"/>
</dbReference>
<dbReference type="PDB" id="8XNW">
    <property type="method" value="EM"/>
    <property type="resolution" value="3.60 A"/>
    <property type="chains" value="s=1-104"/>
</dbReference>
<dbReference type="PDB" id="8XNX">
    <property type="method" value="EM"/>
    <property type="resolution" value="3.50 A"/>
    <property type="chains" value="s=1-104"/>
</dbReference>
<dbReference type="PDB" id="8XNY">
    <property type="method" value="EM"/>
    <property type="resolution" value="4.10 A"/>
    <property type="chains" value="s=1-104"/>
</dbReference>
<dbReference type="PDB" id="8XNZ">
    <property type="method" value="EM"/>
    <property type="resolution" value="3.30 A"/>
    <property type="chains" value="s=1-104"/>
</dbReference>
<dbReference type="PDB" id="8XO0">
    <property type="method" value="EM"/>
    <property type="resolution" value="4.20 A"/>
    <property type="chains" value="s=1-104"/>
</dbReference>
<dbReference type="PDBsum" id="6G2J"/>
<dbReference type="PDBsum" id="6G72"/>
<dbReference type="PDBsum" id="6ZR2"/>
<dbReference type="PDBsum" id="6ZTQ"/>
<dbReference type="PDBsum" id="7AK5"/>
<dbReference type="PDBsum" id="7AK6"/>
<dbReference type="PDBsum" id="7B93"/>
<dbReference type="PDBsum" id="7PSA"/>
<dbReference type="PDBsum" id="8C2S"/>
<dbReference type="PDBsum" id="8CA3"/>
<dbReference type="PDBsum" id="8CA4"/>
<dbReference type="PDBsum" id="8CA5"/>
<dbReference type="PDBsum" id="8IAO"/>
<dbReference type="PDBsum" id="8IAP"/>
<dbReference type="PDBsum" id="8IB4"/>
<dbReference type="PDBsum" id="8IB5"/>
<dbReference type="PDBsum" id="8IB9"/>
<dbReference type="PDBsum" id="8IBA"/>
<dbReference type="PDBsum" id="8IBD"/>
<dbReference type="PDBsum" id="8IBE"/>
<dbReference type="PDBsum" id="8IC2"/>
<dbReference type="PDBsum" id="8IC3"/>
<dbReference type="PDBsum" id="8OLT"/>
<dbReference type="PDBsum" id="8OM1"/>
<dbReference type="PDBsum" id="8PW5"/>
<dbReference type="PDBsum" id="8PW6"/>
<dbReference type="PDBsum" id="8PW7"/>
<dbReference type="PDBsum" id="8RGP"/>
<dbReference type="PDBsum" id="8RGQ"/>
<dbReference type="PDBsum" id="8RGR"/>
<dbReference type="PDBsum" id="8RGT"/>
<dbReference type="PDBsum" id="8UCA"/>
<dbReference type="PDBsum" id="8XNL"/>
<dbReference type="PDBsum" id="8XNM"/>
<dbReference type="PDBsum" id="8XNN"/>
<dbReference type="PDBsum" id="8XNO"/>
<dbReference type="PDBsum" id="8XNP"/>
<dbReference type="PDBsum" id="8XNQ"/>
<dbReference type="PDBsum" id="8XNR"/>
<dbReference type="PDBsum" id="8XNS"/>
<dbReference type="PDBsum" id="8XNT"/>
<dbReference type="PDBsum" id="8XNU"/>
<dbReference type="PDBsum" id="8XNV"/>
<dbReference type="PDBsum" id="8XNW"/>
<dbReference type="PDBsum" id="8XNX"/>
<dbReference type="PDBsum" id="8XNY"/>
<dbReference type="PDBsum" id="8XNZ"/>
<dbReference type="PDBsum" id="8XO0"/>
<dbReference type="EMDB" id="EMD-11377"/>
<dbReference type="EMDB" id="EMD-11424"/>
<dbReference type="EMDB" id="EMD-11810"/>
<dbReference type="EMDB" id="EMD-11811"/>
<dbReference type="EMDB" id="EMD-12095"/>
<dbReference type="EMDB" id="EMD-13611"/>
<dbReference type="EMDB" id="EMD-16398"/>
<dbReference type="EMDB" id="EMD-16516"/>
<dbReference type="EMDB" id="EMD-16517"/>
<dbReference type="EMDB" id="EMD-16518"/>
<dbReference type="EMDB" id="EMD-16962"/>
<dbReference type="EMDB" id="EMD-16965"/>
<dbReference type="EMDB" id="EMD-17989"/>
<dbReference type="EMDB" id="EMD-17990"/>
<dbReference type="EMDB" id="EMD-17991"/>
<dbReference type="EMDB" id="EMD-19145"/>
<dbReference type="EMDB" id="EMD-19146"/>
<dbReference type="EMDB" id="EMD-19147"/>
<dbReference type="EMDB" id="EMD-19148"/>
<dbReference type="EMDB" id="EMD-35313"/>
<dbReference type="EMDB" id="EMD-35314"/>
<dbReference type="EMDB" id="EMD-35331"/>
<dbReference type="EMDB" id="EMD-35332"/>
<dbReference type="EMDB" id="EMD-35336"/>
<dbReference type="EMDB" id="EMD-35337"/>
<dbReference type="EMDB" id="EMD-35340"/>
<dbReference type="EMDB" id="EMD-35341"/>
<dbReference type="EMDB" id="EMD-35352"/>
<dbReference type="EMDB" id="EMD-35353"/>
<dbReference type="EMDB" id="EMD-38506"/>
<dbReference type="EMDB" id="EMD-38507"/>
<dbReference type="EMDB" id="EMD-38508"/>
<dbReference type="EMDB" id="EMD-38509"/>
<dbReference type="EMDB" id="EMD-38510"/>
<dbReference type="EMDB" id="EMD-38511"/>
<dbReference type="EMDB" id="EMD-38512"/>
<dbReference type="EMDB" id="EMD-38513"/>
<dbReference type="EMDB" id="EMD-38514"/>
<dbReference type="EMDB" id="EMD-38515"/>
<dbReference type="EMDB" id="EMD-38516"/>
<dbReference type="EMDB" id="EMD-38517"/>
<dbReference type="EMDB" id="EMD-38518"/>
<dbReference type="EMDB" id="EMD-38519"/>
<dbReference type="EMDB" id="EMD-38520"/>
<dbReference type="EMDB" id="EMD-38521"/>
<dbReference type="EMDB" id="EMD-42122"/>
<dbReference type="EMDB" id="EMD-4345"/>
<dbReference type="EMDB" id="EMD-4356"/>
<dbReference type="SMR" id="Q8BK30"/>
<dbReference type="BioGRID" id="219334">
    <property type="interactions" value="49"/>
</dbReference>
<dbReference type="ComplexPortal" id="CPX-266">
    <property type="entry name" value="Mitochondrial respiratory chain complex I"/>
</dbReference>
<dbReference type="FunCoup" id="Q8BK30">
    <property type="interactions" value="486"/>
</dbReference>
<dbReference type="IntAct" id="Q8BK30">
    <property type="interactions" value="1"/>
</dbReference>
<dbReference type="STRING" id="10090.ENSMUSP00000049000"/>
<dbReference type="GlyGen" id="Q8BK30">
    <property type="glycosylation" value="1 site, 1 O-linked glycan (1 site)"/>
</dbReference>
<dbReference type="iPTMnet" id="Q8BK30"/>
<dbReference type="PhosphoSitePlus" id="Q8BK30"/>
<dbReference type="jPOST" id="Q8BK30"/>
<dbReference type="PaxDb" id="10090-ENSMUSP00000049000"/>
<dbReference type="PeptideAtlas" id="Q8BK30"/>
<dbReference type="ProteomicsDB" id="253050"/>
<dbReference type="Pumba" id="Q8BK30"/>
<dbReference type="Antibodypedia" id="9794">
    <property type="antibodies" value="153 antibodies from 28 providers"/>
</dbReference>
<dbReference type="DNASU" id="78330"/>
<dbReference type="Ensembl" id="ENSMUST00000064798.16">
    <property type="protein sequence ID" value="ENSMUSP00000066303.9"/>
    <property type="gene ID" value="ENSMUSG00000024038.18"/>
</dbReference>
<dbReference type="GeneID" id="78330"/>
<dbReference type="KEGG" id="mmu:78330"/>
<dbReference type="UCSC" id="uc008bvf.1">
    <property type="organism name" value="mouse"/>
</dbReference>
<dbReference type="AGR" id="MGI:1890894"/>
<dbReference type="CTD" id="4731"/>
<dbReference type="MGI" id="MGI:1890894">
    <property type="gene designation" value="Ndufv3"/>
</dbReference>
<dbReference type="VEuPathDB" id="HostDB:ENSMUSG00000024038"/>
<dbReference type="eggNOG" id="ENOG502S46A">
    <property type="taxonomic scope" value="Eukaryota"/>
</dbReference>
<dbReference type="GeneTree" id="ENSGT00390000012196"/>
<dbReference type="HOGENOM" id="CLU_2157565_0_0_1"/>
<dbReference type="InParanoid" id="Q8BK30"/>
<dbReference type="OrthoDB" id="6161911at2759"/>
<dbReference type="Reactome" id="R-MMU-611105">
    <property type="pathway name" value="Respiratory electron transport"/>
</dbReference>
<dbReference type="Reactome" id="R-MMU-6799198">
    <property type="pathway name" value="Complex I biogenesis"/>
</dbReference>
<dbReference type="Reactome" id="R-MMU-9837999">
    <property type="pathway name" value="Mitochondrial protein degradation"/>
</dbReference>
<dbReference type="BioGRID-ORCS" id="78330">
    <property type="hits" value="2 hits in 77 CRISPR screens"/>
</dbReference>
<dbReference type="ChiTaRS" id="Ndufv3">
    <property type="organism name" value="mouse"/>
</dbReference>
<dbReference type="PRO" id="PR:Q8BK30"/>
<dbReference type="Proteomes" id="UP000000589">
    <property type="component" value="Chromosome 17"/>
</dbReference>
<dbReference type="RNAct" id="Q8BK30">
    <property type="molecule type" value="protein"/>
</dbReference>
<dbReference type="Bgee" id="ENSMUSG00000024038">
    <property type="expression patterns" value="Expressed in heart right ventricle and 266 other cell types or tissues"/>
</dbReference>
<dbReference type="ExpressionAtlas" id="Q8BK30">
    <property type="expression patterns" value="baseline and differential"/>
</dbReference>
<dbReference type="GO" id="GO:0005743">
    <property type="term" value="C:mitochondrial inner membrane"/>
    <property type="evidence" value="ECO:0000314"/>
    <property type="project" value="UniProtKB"/>
</dbReference>
<dbReference type="GO" id="GO:0005739">
    <property type="term" value="C:mitochondrion"/>
    <property type="evidence" value="ECO:0007005"/>
    <property type="project" value="MGI"/>
</dbReference>
<dbReference type="GO" id="GO:0045271">
    <property type="term" value="C:respiratory chain complex I"/>
    <property type="evidence" value="ECO:0000314"/>
    <property type="project" value="UniProtKB"/>
</dbReference>
<dbReference type="GO" id="GO:0009060">
    <property type="term" value="P:aerobic respiration"/>
    <property type="evidence" value="ECO:0000303"/>
    <property type="project" value="ComplexPortal"/>
</dbReference>
<dbReference type="GO" id="GO:0042776">
    <property type="term" value="P:proton motive force-driven mitochondrial ATP synthesis"/>
    <property type="evidence" value="ECO:0000303"/>
    <property type="project" value="ComplexPortal"/>
</dbReference>
<dbReference type="InterPro" id="IPR026193">
    <property type="entry name" value="NDUFV3"/>
</dbReference>
<dbReference type="PANTHER" id="PTHR17117:SF1">
    <property type="entry name" value="NADH DEHYDROGENASE [UBIQUINONE] FLAVOPROTEIN 3, MITOCHONDRIAL"/>
    <property type="match status" value="1"/>
</dbReference>
<dbReference type="PANTHER" id="PTHR17117">
    <property type="entry name" value="NADH-UBIQUINONE OXIDOREDUCTASE"/>
    <property type="match status" value="1"/>
</dbReference>
<dbReference type="Pfam" id="PF15880">
    <property type="entry name" value="NDUFV3"/>
    <property type="match status" value="1"/>
</dbReference>
<protein>
    <recommendedName>
        <fullName>NADH dehydrogenase [ubiquinone] flavoprotein 3, mitochondrial</fullName>
    </recommendedName>
    <alternativeName>
        <fullName>Complex I-9kD</fullName>
        <shortName>CI-9kD</shortName>
    </alternativeName>
    <alternativeName>
        <fullName>NADH-ubiquinone oxidoreductase 9 kDa subunit</fullName>
    </alternativeName>
</protein>
<organism>
    <name type="scientific">Mus musculus</name>
    <name type="common">Mouse</name>
    <dbReference type="NCBI Taxonomy" id="10090"/>
    <lineage>
        <taxon>Eukaryota</taxon>
        <taxon>Metazoa</taxon>
        <taxon>Chordata</taxon>
        <taxon>Craniata</taxon>
        <taxon>Vertebrata</taxon>
        <taxon>Euteleostomi</taxon>
        <taxon>Mammalia</taxon>
        <taxon>Eutheria</taxon>
        <taxon>Euarchontoglires</taxon>
        <taxon>Glires</taxon>
        <taxon>Rodentia</taxon>
        <taxon>Myomorpha</taxon>
        <taxon>Muroidea</taxon>
        <taxon>Muridae</taxon>
        <taxon>Murinae</taxon>
        <taxon>Mus</taxon>
        <taxon>Mus</taxon>
    </lineage>
</organism>
<feature type="transit peptide" description="Mitochondrion" evidence="1">
    <location>
        <begin position="1"/>
        <end position="35"/>
    </location>
</feature>
<feature type="chain" id="PRO_0000251883" description="NADH dehydrogenase [ubiquinone] flavoprotein 3, mitochondrial">
    <location>
        <begin position="36"/>
        <end position="104"/>
    </location>
</feature>
<feature type="region of interest" description="Disordered" evidence="3">
    <location>
        <begin position="38"/>
        <end position="68"/>
    </location>
</feature>
<feature type="compositionally biased region" description="Basic and acidic residues" evidence="3">
    <location>
        <begin position="38"/>
        <end position="50"/>
    </location>
</feature>
<feature type="modified residue" description="Phosphoserine" evidence="2">
    <location>
        <position position="101"/>
    </location>
</feature>
<feature type="helix" evidence="7">
    <location>
        <begin position="71"/>
        <end position="74"/>
    </location>
</feature>
<feature type="helix" evidence="7">
    <location>
        <begin position="79"/>
        <end position="86"/>
    </location>
</feature>
<feature type="helix" evidence="7">
    <location>
        <begin position="87"/>
        <end position="90"/>
    </location>
</feature>
<feature type="strand" evidence="7">
    <location>
        <begin position="98"/>
        <end position="100"/>
    </location>
</feature>
<proteinExistence type="evidence at protein level"/>
<gene>
    <name type="primary">Ndufv3</name>
</gene>
<reference key="1">
    <citation type="journal article" date="2005" name="Science">
        <title>The transcriptional landscape of the mammalian genome.</title>
        <authorList>
            <person name="Carninci P."/>
            <person name="Kasukawa T."/>
            <person name="Katayama S."/>
            <person name="Gough J."/>
            <person name="Frith M.C."/>
            <person name="Maeda N."/>
            <person name="Oyama R."/>
            <person name="Ravasi T."/>
            <person name="Lenhard B."/>
            <person name="Wells C."/>
            <person name="Kodzius R."/>
            <person name="Shimokawa K."/>
            <person name="Bajic V.B."/>
            <person name="Brenner S.E."/>
            <person name="Batalov S."/>
            <person name="Forrest A.R."/>
            <person name="Zavolan M."/>
            <person name="Davis M.J."/>
            <person name="Wilming L.G."/>
            <person name="Aidinis V."/>
            <person name="Allen J.E."/>
            <person name="Ambesi-Impiombato A."/>
            <person name="Apweiler R."/>
            <person name="Aturaliya R.N."/>
            <person name="Bailey T.L."/>
            <person name="Bansal M."/>
            <person name="Baxter L."/>
            <person name="Beisel K.W."/>
            <person name="Bersano T."/>
            <person name="Bono H."/>
            <person name="Chalk A.M."/>
            <person name="Chiu K.P."/>
            <person name="Choudhary V."/>
            <person name="Christoffels A."/>
            <person name="Clutterbuck D.R."/>
            <person name="Crowe M.L."/>
            <person name="Dalla E."/>
            <person name="Dalrymple B.P."/>
            <person name="de Bono B."/>
            <person name="Della Gatta G."/>
            <person name="di Bernardo D."/>
            <person name="Down T."/>
            <person name="Engstrom P."/>
            <person name="Fagiolini M."/>
            <person name="Faulkner G."/>
            <person name="Fletcher C.F."/>
            <person name="Fukushima T."/>
            <person name="Furuno M."/>
            <person name="Futaki S."/>
            <person name="Gariboldi M."/>
            <person name="Georgii-Hemming P."/>
            <person name="Gingeras T.R."/>
            <person name="Gojobori T."/>
            <person name="Green R.E."/>
            <person name="Gustincich S."/>
            <person name="Harbers M."/>
            <person name="Hayashi Y."/>
            <person name="Hensch T.K."/>
            <person name="Hirokawa N."/>
            <person name="Hill D."/>
            <person name="Huminiecki L."/>
            <person name="Iacono M."/>
            <person name="Ikeo K."/>
            <person name="Iwama A."/>
            <person name="Ishikawa T."/>
            <person name="Jakt M."/>
            <person name="Kanapin A."/>
            <person name="Katoh M."/>
            <person name="Kawasawa Y."/>
            <person name="Kelso J."/>
            <person name="Kitamura H."/>
            <person name="Kitano H."/>
            <person name="Kollias G."/>
            <person name="Krishnan S.P."/>
            <person name="Kruger A."/>
            <person name="Kummerfeld S.K."/>
            <person name="Kurochkin I.V."/>
            <person name="Lareau L.F."/>
            <person name="Lazarevic D."/>
            <person name="Lipovich L."/>
            <person name="Liu J."/>
            <person name="Liuni S."/>
            <person name="McWilliam S."/>
            <person name="Madan Babu M."/>
            <person name="Madera M."/>
            <person name="Marchionni L."/>
            <person name="Matsuda H."/>
            <person name="Matsuzawa S."/>
            <person name="Miki H."/>
            <person name="Mignone F."/>
            <person name="Miyake S."/>
            <person name="Morris K."/>
            <person name="Mottagui-Tabar S."/>
            <person name="Mulder N."/>
            <person name="Nakano N."/>
            <person name="Nakauchi H."/>
            <person name="Ng P."/>
            <person name="Nilsson R."/>
            <person name="Nishiguchi S."/>
            <person name="Nishikawa S."/>
            <person name="Nori F."/>
            <person name="Ohara O."/>
            <person name="Okazaki Y."/>
            <person name="Orlando V."/>
            <person name="Pang K.C."/>
            <person name="Pavan W.J."/>
            <person name="Pavesi G."/>
            <person name="Pesole G."/>
            <person name="Petrovsky N."/>
            <person name="Piazza S."/>
            <person name="Reed J."/>
            <person name="Reid J.F."/>
            <person name="Ring B.Z."/>
            <person name="Ringwald M."/>
            <person name="Rost B."/>
            <person name="Ruan Y."/>
            <person name="Salzberg S.L."/>
            <person name="Sandelin A."/>
            <person name="Schneider C."/>
            <person name="Schoenbach C."/>
            <person name="Sekiguchi K."/>
            <person name="Semple C.A."/>
            <person name="Seno S."/>
            <person name="Sessa L."/>
            <person name="Sheng Y."/>
            <person name="Shibata Y."/>
            <person name="Shimada H."/>
            <person name="Shimada K."/>
            <person name="Silva D."/>
            <person name="Sinclair B."/>
            <person name="Sperling S."/>
            <person name="Stupka E."/>
            <person name="Sugiura K."/>
            <person name="Sultana R."/>
            <person name="Takenaka Y."/>
            <person name="Taki K."/>
            <person name="Tammoja K."/>
            <person name="Tan S.L."/>
            <person name="Tang S."/>
            <person name="Taylor M.S."/>
            <person name="Tegner J."/>
            <person name="Teichmann S.A."/>
            <person name="Ueda H.R."/>
            <person name="van Nimwegen E."/>
            <person name="Verardo R."/>
            <person name="Wei C.L."/>
            <person name="Yagi K."/>
            <person name="Yamanishi H."/>
            <person name="Zabarovsky E."/>
            <person name="Zhu S."/>
            <person name="Zimmer A."/>
            <person name="Hide W."/>
            <person name="Bult C."/>
            <person name="Grimmond S.M."/>
            <person name="Teasdale R.D."/>
            <person name="Liu E.T."/>
            <person name="Brusic V."/>
            <person name="Quackenbush J."/>
            <person name="Wahlestedt C."/>
            <person name="Mattick J.S."/>
            <person name="Hume D.A."/>
            <person name="Kai C."/>
            <person name="Sasaki D."/>
            <person name="Tomaru Y."/>
            <person name="Fukuda S."/>
            <person name="Kanamori-Katayama M."/>
            <person name="Suzuki M."/>
            <person name="Aoki J."/>
            <person name="Arakawa T."/>
            <person name="Iida J."/>
            <person name="Imamura K."/>
            <person name="Itoh M."/>
            <person name="Kato T."/>
            <person name="Kawaji H."/>
            <person name="Kawagashira N."/>
            <person name="Kawashima T."/>
            <person name="Kojima M."/>
            <person name="Kondo S."/>
            <person name="Konno H."/>
            <person name="Nakano K."/>
            <person name="Ninomiya N."/>
            <person name="Nishio T."/>
            <person name="Okada M."/>
            <person name="Plessy C."/>
            <person name="Shibata K."/>
            <person name="Shiraki T."/>
            <person name="Suzuki S."/>
            <person name="Tagami M."/>
            <person name="Waki K."/>
            <person name="Watahiki A."/>
            <person name="Okamura-Oho Y."/>
            <person name="Suzuki H."/>
            <person name="Kawai J."/>
            <person name="Hayashizaki Y."/>
        </authorList>
    </citation>
    <scope>NUCLEOTIDE SEQUENCE [LARGE SCALE MRNA]</scope>
    <source>
        <strain>C57BL/6J</strain>
    </source>
</reference>
<reference key="2">
    <citation type="journal article" date="2010" name="Cell">
        <title>A tissue-specific atlas of mouse protein phosphorylation and expression.</title>
        <authorList>
            <person name="Huttlin E.L."/>
            <person name="Jedrychowski M.P."/>
            <person name="Elias J.E."/>
            <person name="Goswami T."/>
            <person name="Rad R."/>
            <person name="Beausoleil S.A."/>
            <person name="Villen J."/>
            <person name="Haas W."/>
            <person name="Sowa M.E."/>
            <person name="Gygi S.P."/>
        </authorList>
    </citation>
    <scope>IDENTIFICATION BY MASS SPECTROMETRY [LARGE SCALE ANALYSIS]</scope>
    <source>
        <tissue>Brain</tissue>
        <tissue>Brown adipose tissue</tissue>
        <tissue>Heart</tissue>
        <tissue>Kidney</tissue>
        <tissue>Liver</tissue>
        <tissue>Lung</tissue>
        <tissue>Pancreas</tissue>
        <tissue>Testis</tissue>
    </source>
</reference>
<reference evidence="6" key="3">
    <citation type="journal article" date="2024" name="Nat. Struct. Mol. Biol.">
        <title>SCAF1 drives the compositional diversity of mammalian respirasomes.</title>
        <authorList>
            <person name="Vercellino I."/>
            <person name="Sazanov L.A."/>
        </authorList>
    </citation>
    <scope>STRUCTURE BY ELECTRON MICROSCOPY (3.60 ANGSTROMS) IN COMPLEX WITH MITOCHONDRIAL RESPIRATORY SUPERCOMPLEX</scope>
    <scope>FUNCTION</scope>
    <scope>SUBCELLULAR LOCATION</scope>
    <scope>SUBUNIT</scope>
</reference>
<evidence type="ECO:0000250" key="1"/>
<evidence type="ECO:0000250" key="2">
    <source>
        <dbReference type="UniProtKB" id="P56181"/>
    </source>
</evidence>
<evidence type="ECO:0000256" key="3">
    <source>
        <dbReference type="SAM" id="MobiDB-lite"/>
    </source>
</evidence>
<evidence type="ECO:0000269" key="4">
    <source>
    </source>
</evidence>
<evidence type="ECO:0000305" key="5"/>
<evidence type="ECO:0007744" key="6">
    <source>
        <dbReference type="PDB" id="8PW5"/>
    </source>
</evidence>
<evidence type="ECO:0007829" key="7">
    <source>
        <dbReference type="PDB" id="8OM1"/>
    </source>
</evidence>
<comment type="function">
    <text evidence="4">Accessory subunit of the mitochondrial membrane respiratory chain NADH dehydrogenase (Complex I), that is believed not to be involved in catalysis. Complex I functions in the transfer of electrons from NADH to the respiratory chain. The immediate electron acceptor for the enzyme is believed to be ubiquinone. May be the terminally assembled subunit of Complex I.</text>
</comment>
<comment type="subunit">
    <text evidence="4">Complex I is composed of 45 different subunits. This is a component of the flavoprotein-sulfur (FP) fragment of the enzyme.</text>
</comment>
<comment type="subcellular location">
    <subcellularLocation>
        <location evidence="4">Mitochondrion inner membrane</location>
        <topology evidence="4">Peripheral membrane protein</topology>
        <orientation evidence="4">Matrix side</orientation>
    </subcellularLocation>
</comment>
<comment type="similarity">
    <text evidence="5">Belongs to the complex I NDUFV3 subunit family.</text>
</comment>